<accession>A6QBY6</accession>
<reference key="1">
    <citation type="journal article" date="2007" name="Proc. Natl. Acad. Sci. U.S.A.">
        <title>Deep-sea vent epsilon-proteobacterial genomes provide insights into emergence of pathogens.</title>
        <authorList>
            <person name="Nakagawa S."/>
            <person name="Takaki Y."/>
            <person name="Shimamura S."/>
            <person name="Reysenbach A.-L."/>
            <person name="Takai K."/>
            <person name="Horikoshi K."/>
        </authorList>
    </citation>
    <scope>NUCLEOTIDE SEQUENCE [LARGE SCALE GENOMIC DNA]</scope>
    <source>
        <strain>NBC37-1</strain>
    </source>
</reference>
<sequence>MANEYIFTSESVTEGHPDKMADQISDAILDYIIERDPQARVACETLLSNGFCVIAGELKTAAYAPMQEIAREVVREIGYTDAAYGFDYRSAGVLNGIGEQSPDINVGVDQKGGEIGAGDQGLMFGYACKETKELMPLPISLAHHITRKLAAVRKNGTVPFLRPDGKAQVSVKYVDGKPVAVDTIVVSTQHHETVSLEQVQKAVKEEVIDPVLATYDIDISDITYHINPTGRFVIGGPQGDAGLTGRKIIVDTYGGSCPHGGGAFSGKDPTKVDRSAAYAARYVAKNLVAAGACDKATLQVAYAIGVAKPVSIYVDTHGTAHIDEEKIVSCVESLFDLTPKGIIDSLDLLKPIYKKTAAYGHFGREDMGFSWEKIDKVDEIKAFLGL</sequence>
<organism>
    <name type="scientific">Sulfurovum sp. (strain NBC37-1)</name>
    <dbReference type="NCBI Taxonomy" id="387093"/>
    <lineage>
        <taxon>Bacteria</taxon>
        <taxon>Pseudomonadati</taxon>
        <taxon>Campylobacterota</taxon>
        <taxon>Epsilonproteobacteria</taxon>
        <taxon>Campylobacterales</taxon>
        <taxon>Sulfurovaceae</taxon>
        <taxon>Sulfurovum</taxon>
    </lineage>
</organism>
<proteinExistence type="inferred from homology"/>
<gene>
    <name evidence="1" type="primary">metK</name>
    <name type="ordered locus">SUN_2054</name>
</gene>
<dbReference type="EC" id="2.5.1.6" evidence="1"/>
<dbReference type="EMBL" id="AP009179">
    <property type="protein sequence ID" value="BAF72995.1"/>
    <property type="molecule type" value="Genomic_DNA"/>
</dbReference>
<dbReference type="RefSeq" id="WP_012083816.1">
    <property type="nucleotide sequence ID" value="NC_009663.1"/>
</dbReference>
<dbReference type="SMR" id="A6QBY6"/>
<dbReference type="STRING" id="387093.SUN_2054"/>
<dbReference type="KEGG" id="sun:SUN_2054"/>
<dbReference type="eggNOG" id="COG0192">
    <property type="taxonomic scope" value="Bacteria"/>
</dbReference>
<dbReference type="HOGENOM" id="CLU_041802_1_1_7"/>
<dbReference type="OrthoDB" id="9801686at2"/>
<dbReference type="UniPathway" id="UPA00315">
    <property type="reaction ID" value="UER00080"/>
</dbReference>
<dbReference type="Proteomes" id="UP000006378">
    <property type="component" value="Chromosome"/>
</dbReference>
<dbReference type="GO" id="GO:0005737">
    <property type="term" value="C:cytoplasm"/>
    <property type="evidence" value="ECO:0007669"/>
    <property type="project" value="UniProtKB-SubCell"/>
</dbReference>
<dbReference type="GO" id="GO:0005524">
    <property type="term" value="F:ATP binding"/>
    <property type="evidence" value="ECO:0007669"/>
    <property type="project" value="UniProtKB-UniRule"/>
</dbReference>
<dbReference type="GO" id="GO:0000287">
    <property type="term" value="F:magnesium ion binding"/>
    <property type="evidence" value="ECO:0007669"/>
    <property type="project" value="UniProtKB-UniRule"/>
</dbReference>
<dbReference type="GO" id="GO:0004478">
    <property type="term" value="F:methionine adenosyltransferase activity"/>
    <property type="evidence" value="ECO:0007669"/>
    <property type="project" value="UniProtKB-UniRule"/>
</dbReference>
<dbReference type="GO" id="GO:0006730">
    <property type="term" value="P:one-carbon metabolic process"/>
    <property type="evidence" value="ECO:0007669"/>
    <property type="project" value="UniProtKB-KW"/>
</dbReference>
<dbReference type="GO" id="GO:0006556">
    <property type="term" value="P:S-adenosylmethionine biosynthetic process"/>
    <property type="evidence" value="ECO:0007669"/>
    <property type="project" value="UniProtKB-UniRule"/>
</dbReference>
<dbReference type="CDD" id="cd18079">
    <property type="entry name" value="S-AdoMet_synt"/>
    <property type="match status" value="1"/>
</dbReference>
<dbReference type="FunFam" id="3.30.300.10:FF:000003">
    <property type="entry name" value="S-adenosylmethionine synthase"/>
    <property type="match status" value="1"/>
</dbReference>
<dbReference type="Gene3D" id="3.30.300.10">
    <property type="match status" value="3"/>
</dbReference>
<dbReference type="HAMAP" id="MF_00086">
    <property type="entry name" value="S_AdoMet_synth1"/>
    <property type="match status" value="1"/>
</dbReference>
<dbReference type="InterPro" id="IPR022631">
    <property type="entry name" value="ADOMET_SYNTHASE_CS"/>
</dbReference>
<dbReference type="InterPro" id="IPR022630">
    <property type="entry name" value="S-AdoMet_synt_C"/>
</dbReference>
<dbReference type="InterPro" id="IPR022629">
    <property type="entry name" value="S-AdoMet_synt_central"/>
</dbReference>
<dbReference type="InterPro" id="IPR022628">
    <property type="entry name" value="S-AdoMet_synt_N"/>
</dbReference>
<dbReference type="InterPro" id="IPR002133">
    <property type="entry name" value="S-AdoMet_synthetase"/>
</dbReference>
<dbReference type="InterPro" id="IPR022636">
    <property type="entry name" value="S-AdoMet_synthetase_sfam"/>
</dbReference>
<dbReference type="NCBIfam" id="TIGR01034">
    <property type="entry name" value="metK"/>
    <property type="match status" value="1"/>
</dbReference>
<dbReference type="PANTHER" id="PTHR11964">
    <property type="entry name" value="S-ADENOSYLMETHIONINE SYNTHETASE"/>
    <property type="match status" value="1"/>
</dbReference>
<dbReference type="Pfam" id="PF02773">
    <property type="entry name" value="S-AdoMet_synt_C"/>
    <property type="match status" value="1"/>
</dbReference>
<dbReference type="Pfam" id="PF02772">
    <property type="entry name" value="S-AdoMet_synt_M"/>
    <property type="match status" value="1"/>
</dbReference>
<dbReference type="Pfam" id="PF00438">
    <property type="entry name" value="S-AdoMet_synt_N"/>
    <property type="match status" value="1"/>
</dbReference>
<dbReference type="PIRSF" id="PIRSF000497">
    <property type="entry name" value="MAT"/>
    <property type="match status" value="1"/>
</dbReference>
<dbReference type="SUPFAM" id="SSF55973">
    <property type="entry name" value="S-adenosylmethionine synthetase"/>
    <property type="match status" value="3"/>
</dbReference>
<dbReference type="PROSITE" id="PS00376">
    <property type="entry name" value="ADOMET_SYNTHASE_1"/>
    <property type="match status" value="1"/>
</dbReference>
<dbReference type="PROSITE" id="PS00377">
    <property type="entry name" value="ADOMET_SYNTHASE_2"/>
    <property type="match status" value="1"/>
</dbReference>
<keyword id="KW-0067">ATP-binding</keyword>
<keyword id="KW-0963">Cytoplasm</keyword>
<keyword id="KW-0460">Magnesium</keyword>
<keyword id="KW-0479">Metal-binding</keyword>
<keyword id="KW-0547">Nucleotide-binding</keyword>
<keyword id="KW-0554">One-carbon metabolism</keyword>
<keyword id="KW-0630">Potassium</keyword>
<keyword id="KW-0808">Transferase</keyword>
<feature type="chain" id="PRO_1000007958" description="S-adenosylmethionine synthase">
    <location>
        <begin position="1"/>
        <end position="386"/>
    </location>
</feature>
<feature type="region of interest" description="Flexible loop" evidence="1">
    <location>
        <begin position="100"/>
        <end position="110"/>
    </location>
</feature>
<feature type="binding site" description="in other chain" evidence="1">
    <location>
        <position position="16"/>
    </location>
    <ligand>
        <name>ATP</name>
        <dbReference type="ChEBI" id="CHEBI:30616"/>
        <note>ligand shared between two neighboring subunits</note>
    </ligand>
</feature>
<feature type="binding site" evidence="1">
    <location>
        <position position="18"/>
    </location>
    <ligand>
        <name>Mg(2+)</name>
        <dbReference type="ChEBI" id="CHEBI:18420"/>
    </ligand>
</feature>
<feature type="binding site" evidence="1">
    <location>
        <position position="44"/>
    </location>
    <ligand>
        <name>K(+)</name>
        <dbReference type="ChEBI" id="CHEBI:29103"/>
    </ligand>
</feature>
<feature type="binding site" description="in other chain" evidence="1">
    <location>
        <position position="57"/>
    </location>
    <ligand>
        <name>L-methionine</name>
        <dbReference type="ChEBI" id="CHEBI:57844"/>
        <note>ligand shared between two neighboring subunits</note>
    </ligand>
</feature>
<feature type="binding site" description="in other chain" evidence="1">
    <location>
        <position position="100"/>
    </location>
    <ligand>
        <name>L-methionine</name>
        <dbReference type="ChEBI" id="CHEBI:57844"/>
        <note>ligand shared between two neighboring subunits</note>
    </ligand>
</feature>
<feature type="binding site" description="in other chain" evidence="1">
    <location>
        <begin position="164"/>
        <end position="166"/>
    </location>
    <ligand>
        <name>ATP</name>
        <dbReference type="ChEBI" id="CHEBI:30616"/>
        <note>ligand shared between two neighboring subunits</note>
    </ligand>
</feature>
<feature type="binding site" description="in other chain" evidence="1">
    <location>
        <begin position="231"/>
        <end position="232"/>
    </location>
    <ligand>
        <name>ATP</name>
        <dbReference type="ChEBI" id="CHEBI:30616"/>
        <note>ligand shared between two neighboring subunits</note>
    </ligand>
</feature>
<feature type="binding site" evidence="1">
    <location>
        <position position="240"/>
    </location>
    <ligand>
        <name>ATP</name>
        <dbReference type="ChEBI" id="CHEBI:30616"/>
        <note>ligand shared between two neighboring subunits</note>
    </ligand>
</feature>
<feature type="binding site" evidence="1">
    <location>
        <position position="240"/>
    </location>
    <ligand>
        <name>L-methionine</name>
        <dbReference type="ChEBI" id="CHEBI:57844"/>
        <note>ligand shared between two neighboring subunits</note>
    </ligand>
</feature>
<feature type="binding site" description="in other chain" evidence="1">
    <location>
        <begin position="246"/>
        <end position="247"/>
    </location>
    <ligand>
        <name>ATP</name>
        <dbReference type="ChEBI" id="CHEBI:30616"/>
        <note>ligand shared between two neighboring subunits</note>
    </ligand>
</feature>
<feature type="binding site" evidence="1">
    <location>
        <position position="263"/>
    </location>
    <ligand>
        <name>ATP</name>
        <dbReference type="ChEBI" id="CHEBI:30616"/>
        <note>ligand shared between two neighboring subunits</note>
    </ligand>
</feature>
<feature type="binding site" evidence="1">
    <location>
        <position position="267"/>
    </location>
    <ligand>
        <name>ATP</name>
        <dbReference type="ChEBI" id="CHEBI:30616"/>
        <note>ligand shared between two neighboring subunits</note>
    </ligand>
</feature>
<feature type="binding site" description="in other chain" evidence="1">
    <location>
        <position position="271"/>
    </location>
    <ligand>
        <name>L-methionine</name>
        <dbReference type="ChEBI" id="CHEBI:57844"/>
        <note>ligand shared between two neighboring subunits</note>
    </ligand>
</feature>
<name>METK_SULNB</name>
<comment type="function">
    <text evidence="1">Catalyzes the formation of S-adenosylmethionine (AdoMet) from methionine and ATP. The overall synthetic reaction is composed of two sequential steps, AdoMet formation and the subsequent tripolyphosphate hydrolysis which occurs prior to release of AdoMet from the enzyme.</text>
</comment>
<comment type="catalytic activity">
    <reaction evidence="1">
        <text>L-methionine + ATP + H2O = S-adenosyl-L-methionine + phosphate + diphosphate</text>
        <dbReference type="Rhea" id="RHEA:21080"/>
        <dbReference type="ChEBI" id="CHEBI:15377"/>
        <dbReference type="ChEBI" id="CHEBI:30616"/>
        <dbReference type="ChEBI" id="CHEBI:33019"/>
        <dbReference type="ChEBI" id="CHEBI:43474"/>
        <dbReference type="ChEBI" id="CHEBI:57844"/>
        <dbReference type="ChEBI" id="CHEBI:59789"/>
        <dbReference type="EC" id="2.5.1.6"/>
    </reaction>
</comment>
<comment type="cofactor">
    <cofactor evidence="1">
        <name>Mg(2+)</name>
        <dbReference type="ChEBI" id="CHEBI:18420"/>
    </cofactor>
    <text evidence="1">Binds 2 divalent ions per subunit.</text>
</comment>
<comment type="cofactor">
    <cofactor evidence="1">
        <name>K(+)</name>
        <dbReference type="ChEBI" id="CHEBI:29103"/>
    </cofactor>
    <text evidence="1">Binds 1 potassium ion per subunit.</text>
</comment>
<comment type="pathway">
    <text evidence="1">Amino-acid biosynthesis; S-adenosyl-L-methionine biosynthesis; S-adenosyl-L-methionine from L-methionine: step 1/1.</text>
</comment>
<comment type="subunit">
    <text evidence="1">Homotetramer; dimer of dimers.</text>
</comment>
<comment type="subcellular location">
    <subcellularLocation>
        <location evidence="1">Cytoplasm</location>
    </subcellularLocation>
</comment>
<comment type="similarity">
    <text evidence="1">Belongs to the AdoMet synthase family.</text>
</comment>
<protein>
    <recommendedName>
        <fullName evidence="1">S-adenosylmethionine synthase</fullName>
        <shortName evidence="1">AdoMet synthase</shortName>
        <ecNumber evidence="1">2.5.1.6</ecNumber>
    </recommendedName>
    <alternativeName>
        <fullName evidence="1">MAT</fullName>
    </alternativeName>
    <alternativeName>
        <fullName evidence="1">Methionine adenosyltransferase</fullName>
    </alternativeName>
</protein>
<evidence type="ECO:0000255" key="1">
    <source>
        <dbReference type="HAMAP-Rule" id="MF_00086"/>
    </source>
</evidence>